<protein>
    <recommendedName>
        <fullName evidence="1">sn-glycerol-3-phosphate-binding periplasmic protein UgpB</fullName>
    </recommendedName>
</protein>
<keyword id="KW-0574">Periplasm</keyword>
<keyword id="KW-0732">Signal</keyword>
<keyword id="KW-0813">Transport</keyword>
<feature type="signal peptide" evidence="2">
    <location>
        <begin position="1"/>
        <end position="23"/>
    </location>
</feature>
<feature type="chain" id="PRO_0000292814" description="sn-glycerol-3-phosphate-binding periplasmic protein UgpB">
    <location>
        <begin position="24"/>
        <end position="438"/>
    </location>
</feature>
<feature type="binding site" evidence="1">
    <location>
        <position position="65"/>
    </location>
    <ligand>
        <name>sn-glycerol 3-phosphate</name>
        <dbReference type="ChEBI" id="CHEBI:57597"/>
    </ligand>
</feature>
<feature type="binding site" evidence="1">
    <location>
        <position position="89"/>
    </location>
    <ligand>
        <name>sn-glycerol 3-phosphate</name>
        <dbReference type="ChEBI" id="CHEBI:57597"/>
    </ligand>
</feature>
<feature type="binding site" evidence="1">
    <location>
        <position position="144"/>
    </location>
    <ligand>
        <name>sn-glycerol 3-phosphate</name>
        <dbReference type="ChEBI" id="CHEBI:57597"/>
    </ligand>
</feature>
<feature type="binding site" evidence="1">
    <location>
        <position position="270"/>
    </location>
    <ligand>
        <name>sn-glycerol 3-phosphate</name>
        <dbReference type="ChEBI" id="CHEBI:57597"/>
    </ligand>
</feature>
<feature type="binding site" evidence="1">
    <location>
        <position position="307"/>
    </location>
    <ligand>
        <name>sn-glycerol 3-phosphate</name>
        <dbReference type="ChEBI" id="CHEBI:57597"/>
    </ligand>
</feature>
<feature type="binding site" evidence="1">
    <location>
        <position position="346"/>
    </location>
    <ligand>
        <name>sn-glycerol 3-phosphate</name>
        <dbReference type="ChEBI" id="CHEBI:57597"/>
    </ligand>
</feature>
<feature type="binding site" evidence="1">
    <location>
        <position position="397"/>
    </location>
    <ligand>
        <name>sn-glycerol 3-phosphate</name>
        <dbReference type="ChEBI" id="CHEBI:57597"/>
    </ligand>
</feature>
<name>UGPB_SALPA</name>
<evidence type="ECO:0000250" key="1">
    <source>
        <dbReference type="UniProtKB" id="P0AG80"/>
    </source>
</evidence>
<evidence type="ECO:0000255" key="2"/>
<evidence type="ECO:0000305" key="3"/>
<organism>
    <name type="scientific">Salmonella paratyphi A (strain ATCC 9150 / SARB42)</name>
    <dbReference type="NCBI Taxonomy" id="295319"/>
    <lineage>
        <taxon>Bacteria</taxon>
        <taxon>Pseudomonadati</taxon>
        <taxon>Pseudomonadota</taxon>
        <taxon>Gammaproteobacteria</taxon>
        <taxon>Enterobacterales</taxon>
        <taxon>Enterobacteriaceae</taxon>
        <taxon>Salmonella</taxon>
    </lineage>
</organism>
<dbReference type="EMBL" id="CP000026">
    <property type="protein sequence ID" value="AAV79220.1"/>
    <property type="molecule type" value="Genomic_DNA"/>
</dbReference>
<dbReference type="RefSeq" id="WP_000624750.1">
    <property type="nucleotide sequence ID" value="NC_006511.1"/>
</dbReference>
<dbReference type="SMR" id="Q5PJK8"/>
<dbReference type="KEGG" id="spt:SPA3409"/>
<dbReference type="HOGENOM" id="CLU_031285_3_0_6"/>
<dbReference type="Proteomes" id="UP000008185">
    <property type="component" value="Chromosome"/>
</dbReference>
<dbReference type="GO" id="GO:0030288">
    <property type="term" value="C:outer membrane-bounded periplasmic space"/>
    <property type="evidence" value="ECO:0007669"/>
    <property type="project" value="UniProtKB-ARBA"/>
</dbReference>
<dbReference type="GO" id="GO:0055085">
    <property type="term" value="P:transmembrane transport"/>
    <property type="evidence" value="ECO:0007669"/>
    <property type="project" value="InterPro"/>
</dbReference>
<dbReference type="CDD" id="cd14748">
    <property type="entry name" value="PBP2_UgpB"/>
    <property type="match status" value="1"/>
</dbReference>
<dbReference type="Gene3D" id="3.40.190.10">
    <property type="entry name" value="Periplasmic binding protein-like II"/>
    <property type="match status" value="2"/>
</dbReference>
<dbReference type="InterPro" id="IPR050490">
    <property type="entry name" value="Bact_solute-bd_prot1"/>
</dbReference>
<dbReference type="InterPro" id="IPR006059">
    <property type="entry name" value="SBP"/>
</dbReference>
<dbReference type="InterPro" id="IPR006061">
    <property type="entry name" value="SBP_1_CS"/>
</dbReference>
<dbReference type="NCBIfam" id="NF008211">
    <property type="entry name" value="PRK10974.1"/>
    <property type="match status" value="1"/>
</dbReference>
<dbReference type="PANTHER" id="PTHR43649">
    <property type="entry name" value="ARABINOSE-BINDING PROTEIN-RELATED"/>
    <property type="match status" value="1"/>
</dbReference>
<dbReference type="PANTHER" id="PTHR43649:SF31">
    <property type="entry name" value="SN-GLYCEROL-3-PHOSPHATE-BINDING PERIPLASMIC PROTEIN UGPB"/>
    <property type="match status" value="1"/>
</dbReference>
<dbReference type="Pfam" id="PF13416">
    <property type="entry name" value="SBP_bac_8"/>
    <property type="match status" value="1"/>
</dbReference>
<dbReference type="SUPFAM" id="SSF53850">
    <property type="entry name" value="Periplasmic binding protein-like II"/>
    <property type="match status" value="1"/>
</dbReference>
<dbReference type="PROSITE" id="PS01037">
    <property type="entry name" value="SBP_BACTERIAL_1"/>
    <property type="match status" value="1"/>
</dbReference>
<comment type="function">
    <text evidence="1">Part of the ABC transporter complex UgpBAEC involved in sn-glycerol-3-phosphate (G3P) import. Binds G3P.</text>
</comment>
<comment type="subunit">
    <text evidence="1">The complex is composed of two ATP-binding proteins (UgpC), two transmembrane proteins (UgpA and UgpE) and a solute-binding protein (UgpB).</text>
</comment>
<comment type="subcellular location">
    <subcellularLocation>
        <location evidence="1">Periplasm</location>
    </subcellularLocation>
</comment>
<comment type="similarity">
    <text evidence="3">Belongs to the bacterial solute-binding protein 1 family.</text>
</comment>
<accession>Q5PJK8</accession>
<gene>
    <name type="primary">ugpB</name>
    <name type="ordered locus">SPA3409</name>
</gene>
<reference key="1">
    <citation type="journal article" date="2004" name="Nat. Genet.">
        <title>Comparison of genome degradation in Paratyphi A and Typhi, human-restricted serovars of Salmonella enterica that cause typhoid.</title>
        <authorList>
            <person name="McClelland M."/>
            <person name="Sanderson K.E."/>
            <person name="Clifton S.W."/>
            <person name="Latreille P."/>
            <person name="Porwollik S."/>
            <person name="Sabo A."/>
            <person name="Meyer R."/>
            <person name="Bieri T."/>
            <person name="Ozersky P."/>
            <person name="McLellan M."/>
            <person name="Harkins C.R."/>
            <person name="Wang C."/>
            <person name="Nguyen C."/>
            <person name="Berghoff A."/>
            <person name="Elliott G."/>
            <person name="Kohlberg S."/>
            <person name="Strong C."/>
            <person name="Du F."/>
            <person name="Carter J."/>
            <person name="Kremizki C."/>
            <person name="Layman D."/>
            <person name="Leonard S."/>
            <person name="Sun H."/>
            <person name="Fulton L."/>
            <person name="Nash W."/>
            <person name="Miner T."/>
            <person name="Minx P."/>
            <person name="Delehaunty K."/>
            <person name="Fronick C."/>
            <person name="Magrini V."/>
            <person name="Nhan M."/>
            <person name="Warren W."/>
            <person name="Florea L."/>
            <person name="Spieth J."/>
            <person name="Wilson R.K."/>
        </authorList>
    </citation>
    <scope>NUCLEOTIDE SEQUENCE [LARGE SCALE GENOMIC DNA]</scope>
    <source>
        <strain>ATCC 9150 / SARB42</strain>
    </source>
</reference>
<proteinExistence type="inferred from homology"/>
<sequence length="438" mass="48455">MISLRHTALGLALSLAFTGQALAVTTIPFWHSMEGELGKEVDSLAQRFNQANPDYKIVPVYKGNYEQNLSAGIAAFRTGNAPAILQVYEVGTATMMASKAIKPVYEVFKDAGINFDESQFVPTVAGYYTDAKSGHLLSQPFNSSTPVLYYNKDAFKKAGLDPEQPPKTWQELADYTAKLRAAGMKCGYASGWQGWIQLENFSAWNGLPFASKNNGFDGTDAVLEFNKPEQVKHIALLEEMNKKGDFSYVGRKDESTEKFYNGDCAMTTASSGSLANIRQYAKFNYGVGMMPYDADIKGAPQNAIIGGASLWVMQGKYKETYTGVAKFLDFLAKPENAAEWHQKTGYLPITTAAYELTREQGYYDKNPGADIATRQMLNKPPLPFTKGLRLGNMPQIRTIVDEELESVWTGKKTPQQALDTAVERGNQLLRRFEKASKS</sequence>